<name>RHOA_RAT</name>
<reference key="1">
    <citation type="submission" date="2001-01" db="EMBL/GenBank/DDBJ databases">
        <title>Sequence of Wistar-Kyoto (WKY) and spontaneously hypertensive rat (SHR) RhoA cDNA.</title>
        <authorList>
            <person name="Andresen B.T."/>
            <person name="Jackson E.K."/>
            <person name="Romero G.G."/>
        </authorList>
    </citation>
    <scope>NUCLEOTIDE SEQUENCE [MRNA]</scope>
    <source>
        <strain>SHR</strain>
        <strain>Wistar Kyoto</strain>
    </source>
</reference>
<reference key="2">
    <citation type="journal article" date="2004" name="Genome Res.">
        <title>The status, quality, and expansion of the NIH full-length cDNA project: the Mammalian Gene Collection (MGC).</title>
        <authorList>
            <consortium name="The MGC Project Team"/>
        </authorList>
    </citation>
    <scope>NUCLEOTIDE SEQUENCE [LARGE SCALE MRNA]</scope>
    <source>
        <tissue>Prostate</tissue>
    </source>
</reference>
<reference key="3">
    <citation type="journal article" date="1998" name="Cell">
        <title>The small GTP-binding protein RhoA regulates a delayed rectifier potassium channel.</title>
        <authorList>
            <person name="Cachero T.G."/>
            <person name="Morielli A.D."/>
            <person name="Peralta E.G."/>
        </authorList>
    </citation>
    <scope>FUNCTION</scope>
    <scope>INTERACTION WITH KCNA2</scope>
</reference>
<reference key="4">
    <citation type="journal article" date="2008" name="Circ. Res.">
        <title>Ste20-related kinase SLK phosphorylates Ser188 of RhoA to induce vasodilation in response to angiotensin II Type 2 receptor activation.</title>
        <authorList>
            <person name="Guilluy C."/>
            <person name="Rolli-Derkinderen M."/>
            <person name="Loufrani L."/>
            <person name="Bourge A."/>
            <person name="Henrion D."/>
            <person name="Sabourin L."/>
            <person name="Loirand G."/>
            <person name="Pacaud P."/>
        </authorList>
    </citation>
    <scope>PHOSPHORYLATION AT SER-188</scope>
</reference>
<reference key="5">
    <citation type="journal article" date="2011" name="Nature">
        <title>Local, persistent activation of Rho GTPases during plasticity of single dendritic spines.</title>
        <authorList>
            <person name="Murakoshi H."/>
            <person name="Wang H."/>
            <person name="Yasuda R."/>
        </authorList>
    </citation>
    <scope>FUNCTION</scope>
    <scope>SUBCELLULAR LOCATION</scope>
</reference>
<sequence>MAAIRKKLVIVGDGACGKTCLLIVFSKDQFPEVYVPTVFENYVADIEVDGKQVELALWDTAGQEDYDRLRPLSYPDTDVILMCFSIDSPDSLENIPEKWTPEVKHFCPNVPIILVGNKKDLRNDEHTRRELAKMKQEPVKPEEGRDMANRIGAFGYMECSAKTKDGVREVFEMATRAALQARRGKKKSGCLIL</sequence>
<organism>
    <name type="scientific">Rattus norvegicus</name>
    <name type="common">Rat</name>
    <dbReference type="NCBI Taxonomy" id="10116"/>
    <lineage>
        <taxon>Eukaryota</taxon>
        <taxon>Metazoa</taxon>
        <taxon>Chordata</taxon>
        <taxon>Craniata</taxon>
        <taxon>Vertebrata</taxon>
        <taxon>Euteleostomi</taxon>
        <taxon>Mammalia</taxon>
        <taxon>Eutheria</taxon>
        <taxon>Euarchontoglires</taxon>
        <taxon>Glires</taxon>
        <taxon>Rodentia</taxon>
        <taxon>Myomorpha</taxon>
        <taxon>Muroidea</taxon>
        <taxon>Muridae</taxon>
        <taxon>Murinae</taxon>
        <taxon>Rattus</taxon>
    </lineage>
</organism>
<gene>
    <name evidence="11" type="primary">Rhoa</name>
    <name type="synonym">Arha</name>
    <name type="synonym">Arha2</name>
</gene>
<protein>
    <recommendedName>
        <fullName evidence="9">Transforming protein RhoA</fullName>
        <ecNumber evidence="2">3.6.5.2</ecNumber>
    </recommendedName>
</protein>
<proteinExistence type="evidence at protein level"/>
<evidence type="ECO:0000250" key="1">
    <source>
        <dbReference type="UniProtKB" id="P61585"/>
    </source>
</evidence>
<evidence type="ECO:0000250" key="2">
    <source>
        <dbReference type="UniProtKB" id="P61586"/>
    </source>
</evidence>
<evidence type="ECO:0000250" key="3">
    <source>
        <dbReference type="UniProtKB" id="P62820"/>
    </source>
</evidence>
<evidence type="ECO:0000250" key="4">
    <source>
        <dbReference type="UniProtKB" id="Q9QUI0"/>
    </source>
</evidence>
<evidence type="ECO:0000255" key="5"/>
<evidence type="ECO:0000269" key="6">
    <source>
    </source>
</evidence>
<evidence type="ECO:0000269" key="7">
    <source>
    </source>
</evidence>
<evidence type="ECO:0000269" key="8">
    <source>
    </source>
</evidence>
<evidence type="ECO:0000305" key="9"/>
<evidence type="ECO:0000305" key="10">
    <source>
    </source>
</evidence>
<evidence type="ECO:0000312" key="11">
    <source>
        <dbReference type="RGD" id="619921"/>
    </source>
</evidence>
<evidence type="ECO:0007829" key="12">
    <source>
        <dbReference type="PDB" id="3TVD"/>
    </source>
</evidence>
<evidence type="ECO:0007829" key="13">
    <source>
        <dbReference type="PDB" id="7XQV"/>
    </source>
</evidence>
<dbReference type="EC" id="3.6.5.2" evidence="2"/>
<dbReference type="EMBL" id="AY026068">
    <property type="protein sequence ID" value="AAK11717.1"/>
    <property type="molecule type" value="mRNA"/>
</dbReference>
<dbReference type="EMBL" id="AY026069">
    <property type="protein sequence ID" value="AAK11718.1"/>
    <property type="molecule type" value="mRNA"/>
</dbReference>
<dbReference type="EMBL" id="BC061732">
    <property type="protein sequence ID" value="AAH61732.1"/>
    <property type="molecule type" value="mRNA"/>
</dbReference>
<dbReference type="RefSeq" id="NP_476473.1">
    <property type="nucleotide sequence ID" value="NM_057132.4"/>
</dbReference>
<dbReference type="RefSeq" id="XP_006243761.1">
    <property type="nucleotide sequence ID" value="XM_006243699.3"/>
</dbReference>
<dbReference type="RefSeq" id="XP_006243762.1">
    <property type="nucleotide sequence ID" value="XM_006243700.3"/>
</dbReference>
<dbReference type="RefSeq" id="XP_006243763.1">
    <property type="nucleotide sequence ID" value="XM_006243701.2"/>
</dbReference>
<dbReference type="RefSeq" id="XP_038936642.1">
    <property type="nucleotide sequence ID" value="XM_039080714.2"/>
</dbReference>
<dbReference type="RefSeq" id="XP_063120856.1">
    <property type="nucleotide sequence ID" value="XM_063264786.1"/>
</dbReference>
<dbReference type="RefSeq" id="XP_063120857.1">
    <property type="nucleotide sequence ID" value="XM_063264787.1"/>
</dbReference>
<dbReference type="RefSeq" id="XP_063120858.1">
    <property type="nucleotide sequence ID" value="XM_063264788.1"/>
</dbReference>
<dbReference type="RefSeq" id="XP_063120859.1">
    <property type="nucleotide sequence ID" value="XM_063264789.1"/>
</dbReference>
<dbReference type="RefSeq" id="XP_063120860.1">
    <property type="nucleotide sequence ID" value="XM_063264790.1"/>
</dbReference>
<dbReference type="RefSeq" id="XP_063120861.1">
    <property type="nucleotide sequence ID" value="XM_063264791.1"/>
</dbReference>
<dbReference type="RefSeq" id="XP_063120862.1">
    <property type="nucleotide sequence ID" value="XM_063264792.1"/>
</dbReference>
<dbReference type="PDB" id="3TVD">
    <property type="method" value="X-ray"/>
    <property type="resolution" value="2.99 A"/>
    <property type="chains" value="A/B=1-193"/>
</dbReference>
<dbReference type="PDB" id="7XQV">
    <property type="method" value="X-ray"/>
    <property type="resolution" value="2.76 A"/>
    <property type="chains" value="A=1-182"/>
</dbReference>
<dbReference type="PDBsum" id="3TVD"/>
<dbReference type="PDBsum" id="7XQV"/>
<dbReference type="BMRB" id="P61589"/>
<dbReference type="SMR" id="P61589"/>
<dbReference type="BioGRID" id="250720">
    <property type="interactions" value="5"/>
</dbReference>
<dbReference type="FunCoup" id="P61589">
    <property type="interactions" value="3781"/>
</dbReference>
<dbReference type="IntAct" id="P61589">
    <property type="interactions" value="7"/>
</dbReference>
<dbReference type="MINT" id="P61589"/>
<dbReference type="STRING" id="10116.ENSRNOP00000066672"/>
<dbReference type="iPTMnet" id="P61589"/>
<dbReference type="PhosphoSitePlus" id="P61589"/>
<dbReference type="SwissPalm" id="P61589"/>
<dbReference type="jPOST" id="P61589"/>
<dbReference type="PaxDb" id="10116-ENSRNOP00000066672"/>
<dbReference type="Ensembl" id="ENSRNOT00000094929.1">
    <property type="protein sequence ID" value="ENSRNOP00000091658.1"/>
    <property type="gene ID" value="ENSRNOG00000050519.3"/>
</dbReference>
<dbReference type="GeneID" id="117273"/>
<dbReference type="KEGG" id="rno:117273"/>
<dbReference type="AGR" id="RGD:619921"/>
<dbReference type="CTD" id="387"/>
<dbReference type="RGD" id="619921">
    <property type="gene designation" value="Rhoa"/>
</dbReference>
<dbReference type="eggNOG" id="KOG0393">
    <property type="taxonomic scope" value="Eukaryota"/>
</dbReference>
<dbReference type="GeneTree" id="ENSGT00950000182945"/>
<dbReference type="HOGENOM" id="CLU_041217_21_2_1"/>
<dbReference type="InParanoid" id="P61589"/>
<dbReference type="OrthoDB" id="4186at9989"/>
<dbReference type="PhylomeDB" id="P61589"/>
<dbReference type="Reactome" id="R-RNO-114604">
    <property type="pathway name" value="GPVI-mediated activation cascade"/>
</dbReference>
<dbReference type="Reactome" id="R-RNO-193634">
    <property type="pathway name" value="Axonal growth inhibition (RHOA activation)"/>
</dbReference>
<dbReference type="Reactome" id="R-RNO-198203">
    <property type="pathway name" value="PI3K/AKT activation"/>
</dbReference>
<dbReference type="Reactome" id="R-RNO-209563">
    <property type="pathway name" value="Axonal growth stimulation"/>
</dbReference>
<dbReference type="Reactome" id="R-RNO-2173791">
    <property type="pathway name" value="TGF-beta receptor signaling in EMT (epithelial to mesenchymal transition)"/>
</dbReference>
<dbReference type="Reactome" id="R-RNO-392451">
    <property type="pathway name" value="G beta:gamma signalling through PI3Kgamma"/>
</dbReference>
<dbReference type="Reactome" id="R-RNO-3928662">
    <property type="pathway name" value="EPHB-mediated forward signaling"/>
</dbReference>
<dbReference type="Reactome" id="R-RNO-3928663">
    <property type="pathway name" value="EPHA-mediated growth cone collapse"/>
</dbReference>
<dbReference type="Reactome" id="R-RNO-4086400">
    <property type="pathway name" value="PCP/CE pathway"/>
</dbReference>
<dbReference type="Reactome" id="R-RNO-416482">
    <property type="pathway name" value="G alpha (12/13) signalling events"/>
</dbReference>
<dbReference type="Reactome" id="R-RNO-416550">
    <property type="pathway name" value="Sema4D mediated inhibition of cell attachment and migration"/>
</dbReference>
<dbReference type="Reactome" id="R-RNO-416572">
    <property type="pathway name" value="Sema4D induced cell migration and growth-cone collapse"/>
</dbReference>
<dbReference type="Reactome" id="R-RNO-4420097">
    <property type="pathway name" value="VEGFA-VEGFR2 Pathway"/>
</dbReference>
<dbReference type="Reactome" id="R-RNO-5625740">
    <property type="pathway name" value="RHO GTPases activate PKNs"/>
</dbReference>
<dbReference type="Reactome" id="R-RNO-5625900">
    <property type="pathway name" value="RHO GTPases activate CIT"/>
</dbReference>
<dbReference type="Reactome" id="R-RNO-5625970">
    <property type="pathway name" value="RHO GTPases activate KTN1"/>
</dbReference>
<dbReference type="Reactome" id="R-RNO-5627117">
    <property type="pathway name" value="RHO GTPases Activate ROCKs"/>
</dbReference>
<dbReference type="Reactome" id="R-RNO-5663220">
    <property type="pathway name" value="RHO GTPases Activate Formins"/>
</dbReference>
<dbReference type="Reactome" id="R-RNO-5666185">
    <property type="pathway name" value="RHO GTPases Activate Rhotekin and Rhophilins"/>
</dbReference>
<dbReference type="Reactome" id="R-RNO-5689896">
    <property type="pathway name" value="Ovarian tumor domain proteases"/>
</dbReference>
<dbReference type="Reactome" id="R-RNO-6785631">
    <property type="pathway name" value="ERBB2 Regulates Cell Motility"/>
</dbReference>
<dbReference type="Reactome" id="R-RNO-6798695">
    <property type="pathway name" value="Neutrophil degranulation"/>
</dbReference>
<dbReference type="Reactome" id="R-RNO-8849471">
    <property type="pathway name" value="PTK6 Regulates RHO GTPases, RAS GTPase and MAP kinases"/>
</dbReference>
<dbReference type="Reactome" id="R-RNO-8980692">
    <property type="pathway name" value="RHOA GTPase cycle"/>
</dbReference>
<dbReference type="Reactome" id="R-RNO-8985586">
    <property type="pathway name" value="SLIT2:ROBO1 increases RHOA activity"/>
</dbReference>
<dbReference type="EvolutionaryTrace" id="P61589"/>
<dbReference type="PRO" id="PR:P61589"/>
<dbReference type="Proteomes" id="UP000002494">
    <property type="component" value="Chromosome 8"/>
</dbReference>
<dbReference type="Bgee" id="ENSRNOG00000050519">
    <property type="expression patterns" value="Expressed in lung and 19 other cell types or tissues"/>
</dbReference>
<dbReference type="GO" id="GO:0043296">
    <property type="term" value="C:apical junction complex"/>
    <property type="evidence" value="ECO:0000250"/>
    <property type="project" value="UniProtKB"/>
</dbReference>
<dbReference type="GO" id="GO:0030424">
    <property type="term" value="C:axon"/>
    <property type="evidence" value="ECO:0000314"/>
    <property type="project" value="RGD"/>
</dbReference>
<dbReference type="GO" id="GO:0005938">
    <property type="term" value="C:cell cortex"/>
    <property type="evidence" value="ECO:0000250"/>
    <property type="project" value="UniProtKB"/>
</dbReference>
<dbReference type="GO" id="GO:0071944">
    <property type="term" value="C:cell periphery"/>
    <property type="evidence" value="ECO:0000266"/>
    <property type="project" value="RGD"/>
</dbReference>
<dbReference type="GO" id="GO:0032154">
    <property type="term" value="C:cleavage furrow"/>
    <property type="evidence" value="ECO:0000266"/>
    <property type="project" value="RGD"/>
</dbReference>
<dbReference type="GO" id="GO:0009898">
    <property type="term" value="C:cytoplasmic side of plasma membrane"/>
    <property type="evidence" value="ECO:0000250"/>
    <property type="project" value="UniProtKB"/>
</dbReference>
<dbReference type="GO" id="GO:0005829">
    <property type="term" value="C:cytosol"/>
    <property type="evidence" value="ECO:0000314"/>
    <property type="project" value="BHF-UCL"/>
</dbReference>
<dbReference type="GO" id="GO:0030425">
    <property type="term" value="C:dendrite"/>
    <property type="evidence" value="ECO:0000314"/>
    <property type="project" value="RGD"/>
</dbReference>
<dbReference type="GO" id="GO:0043197">
    <property type="term" value="C:dendritic spine"/>
    <property type="evidence" value="ECO:0000314"/>
    <property type="project" value="RGD"/>
</dbReference>
<dbReference type="GO" id="GO:0005768">
    <property type="term" value="C:endosome"/>
    <property type="evidence" value="ECO:0000266"/>
    <property type="project" value="RGD"/>
</dbReference>
<dbReference type="GO" id="GO:0098978">
    <property type="term" value="C:glutamatergic synapse"/>
    <property type="evidence" value="ECO:0000266"/>
    <property type="project" value="RGD"/>
</dbReference>
<dbReference type="GO" id="GO:0030027">
    <property type="term" value="C:lamellipodium"/>
    <property type="evidence" value="ECO:0000250"/>
    <property type="project" value="UniProtKB"/>
</dbReference>
<dbReference type="GO" id="GO:0072687">
    <property type="term" value="C:meiotic spindle"/>
    <property type="evidence" value="ECO:0000266"/>
    <property type="project" value="RGD"/>
</dbReference>
<dbReference type="GO" id="GO:0016020">
    <property type="term" value="C:membrane"/>
    <property type="evidence" value="ECO:0000314"/>
    <property type="project" value="BHF-UCL"/>
</dbReference>
<dbReference type="GO" id="GO:0030496">
    <property type="term" value="C:midbody"/>
    <property type="evidence" value="ECO:0007669"/>
    <property type="project" value="UniProtKB-SubCell"/>
</dbReference>
<dbReference type="GO" id="GO:0043025">
    <property type="term" value="C:neuronal cell body"/>
    <property type="evidence" value="ECO:0000314"/>
    <property type="project" value="RGD"/>
</dbReference>
<dbReference type="GO" id="GO:0005634">
    <property type="term" value="C:nucleus"/>
    <property type="evidence" value="ECO:0000266"/>
    <property type="project" value="RGD"/>
</dbReference>
<dbReference type="GO" id="GO:0005886">
    <property type="term" value="C:plasma membrane"/>
    <property type="evidence" value="ECO:0000266"/>
    <property type="project" value="RGD"/>
</dbReference>
<dbReference type="GO" id="GO:0098794">
    <property type="term" value="C:postsynapse"/>
    <property type="evidence" value="ECO:0000266"/>
    <property type="project" value="RGD"/>
</dbReference>
<dbReference type="GO" id="GO:0032587">
    <property type="term" value="C:ruffle membrane"/>
    <property type="evidence" value="ECO:0000266"/>
    <property type="project" value="RGD"/>
</dbReference>
<dbReference type="GO" id="GO:0031982">
    <property type="term" value="C:vesicle"/>
    <property type="evidence" value="ECO:0000266"/>
    <property type="project" value="RGD"/>
</dbReference>
<dbReference type="GO" id="GO:0003925">
    <property type="term" value="F:G protein activity"/>
    <property type="evidence" value="ECO:0000266"/>
    <property type="project" value="RGD"/>
</dbReference>
<dbReference type="GO" id="GO:0019003">
    <property type="term" value="F:GDP binding"/>
    <property type="evidence" value="ECO:0000314"/>
    <property type="project" value="RGD"/>
</dbReference>
<dbReference type="GO" id="GO:0005525">
    <property type="term" value="F:GTP binding"/>
    <property type="evidence" value="ECO:0000314"/>
    <property type="project" value="RGD"/>
</dbReference>
<dbReference type="GO" id="GO:0003924">
    <property type="term" value="F:GTPase activity"/>
    <property type="evidence" value="ECO:0000314"/>
    <property type="project" value="BHF-UCL"/>
</dbReference>
<dbReference type="GO" id="GO:0017022">
    <property type="term" value="F:myosin binding"/>
    <property type="evidence" value="ECO:0000266"/>
    <property type="project" value="RGD"/>
</dbReference>
<dbReference type="GO" id="GO:0019904">
    <property type="term" value="F:protein domain specific binding"/>
    <property type="evidence" value="ECO:0000353"/>
    <property type="project" value="RGD"/>
</dbReference>
<dbReference type="GO" id="GO:0019901">
    <property type="term" value="F:protein kinase binding"/>
    <property type="evidence" value="ECO:0000318"/>
    <property type="project" value="GO_Central"/>
</dbReference>
<dbReference type="GO" id="GO:0051022">
    <property type="term" value="F:Rho GDP-dissociation inhibitor binding"/>
    <property type="evidence" value="ECO:0000353"/>
    <property type="project" value="RGD"/>
</dbReference>
<dbReference type="GO" id="GO:0030036">
    <property type="term" value="P:actin cytoskeleton organization"/>
    <property type="evidence" value="ECO:0000250"/>
    <property type="project" value="UniProtKB"/>
</dbReference>
<dbReference type="GO" id="GO:0002363">
    <property type="term" value="P:alpha-beta T cell lineage commitment"/>
    <property type="evidence" value="ECO:0000266"/>
    <property type="project" value="RGD"/>
</dbReference>
<dbReference type="GO" id="GO:0030521">
    <property type="term" value="P:androgen receptor signaling pathway"/>
    <property type="evidence" value="ECO:0000266"/>
    <property type="project" value="RGD"/>
</dbReference>
<dbReference type="GO" id="GO:0001998">
    <property type="term" value="P:angiotensin-mediated vasoconstriction involved in regulation of systemic arterial blood pressure"/>
    <property type="evidence" value="ECO:0000266"/>
    <property type="project" value="RGD"/>
</dbReference>
<dbReference type="GO" id="GO:0003189">
    <property type="term" value="P:aortic valve formation"/>
    <property type="evidence" value="ECO:0000266"/>
    <property type="project" value="RGD"/>
</dbReference>
<dbReference type="GO" id="GO:0043297">
    <property type="term" value="P:apical junction assembly"/>
    <property type="evidence" value="ECO:0000250"/>
    <property type="project" value="UniProtKB"/>
</dbReference>
<dbReference type="GO" id="GO:0038027">
    <property type="term" value="P:apolipoprotein A-I-mediated signaling pathway"/>
    <property type="evidence" value="ECO:0000266"/>
    <property type="project" value="RGD"/>
</dbReference>
<dbReference type="GO" id="GO:0043366">
    <property type="term" value="P:beta selection"/>
    <property type="evidence" value="ECO:0000266"/>
    <property type="project" value="RGD"/>
</dbReference>
<dbReference type="GO" id="GO:0061430">
    <property type="term" value="P:bone trabecula morphogenesis"/>
    <property type="evidence" value="ECO:0000266"/>
    <property type="project" value="RGD"/>
</dbReference>
<dbReference type="GO" id="GO:0007155">
    <property type="term" value="P:cell adhesion"/>
    <property type="evidence" value="ECO:0000266"/>
    <property type="project" value="RGD"/>
</dbReference>
<dbReference type="GO" id="GO:0030154">
    <property type="term" value="P:cell differentiation"/>
    <property type="evidence" value="ECO:0000266"/>
    <property type="project" value="RGD"/>
</dbReference>
<dbReference type="GO" id="GO:0034329">
    <property type="term" value="P:cell junction assembly"/>
    <property type="evidence" value="ECO:0000250"/>
    <property type="project" value="UniProtKB"/>
</dbReference>
<dbReference type="GO" id="GO:0016477">
    <property type="term" value="P:cell migration"/>
    <property type="evidence" value="ECO:0000250"/>
    <property type="project" value="UniProtKB"/>
</dbReference>
<dbReference type="GO" id="GO:0000902">
    <property type="term" value="P:cell morphogenesis"/>
    <property type="evidence" value="ECO:0000266"/>
    <property type="project" value="RGD"/>
</dbReference>
<dbReference type="GO" id="GO:0007160">
    <property type="term" value="P:cell-matrix adhesion"/>
    <property type="evidence" value="ECO:0000266"/>
    <property type="project" value="RGD"/>
</dbReference>
<dbReference type="GO" id="GO:1990869">
    <property type="term" value="P:cellular response to chemokine"/>
    <property type="evidence" value="ECO:0000250"/>
    <property type="project" value="UniProtKB"/>
</dbReference>
<dbReference type="GO" id="GO:0071345">
    <property type="term" value="P:cellular response to cytokine stimulus"/>
    <property type="evidence" value="ECO:0000266"/>
    <property type="project" value="RGD"/>
</dbReference>
<dbReference type="GO" id="GO:0071222">
    <property type="term" value="P:cellular response to lipopolysaccharide"/>
    <property type="evidence" value="ECO:0000266"/>
    <property type="project" value="RGD"/>
</dbReference>
<dbReference type="GO" id="GO:0071393">
    <property type="term" value="P:cellular response to progesterone stimulus"/>
    <property type="evidence" value="ECO:0000303"/>
    <property type="project" value="BHF-UCL"/>
</dbReference>
<dbReference type="GO" id="GO:0021795">
    <property type="term" value="P:cerebral cortex cell migration"/>
    <property type="evidence" value="ECO:0000266"/>
    <property type="project" value="RGD"/>
</dbReference>
<dbReference type="GO" id="GO:0036089">
    <property type="term" value="P:cleavage furrow formation"/>
    <property type="evidence" value="ECO:0000250"/>
    <property type="project" value="UniProtKB"/>
</dbReference>
<dbReference type="GO" id="GO:0031122">
    <property type="term" value="P:cytoplasmic microtubule organization"/>
    <property type="evidence" value="ECO:0000266"/>
    <property type="project" value="RGD"/>
</dbReference>
<dbReference type="GO" id="GO:0007010">
    <property type="term" value="P:cytoskeleton organization"/>
    <property type="evidence" value="ECO:0000266"/>
    <property type="project" value="RGD"/>
</dbReference>
<dbReference type="GO" id="GO:0040016">
    <property type="term" value="P:embryonic cleavage"/>
    <property type="evidence" value="ECO:0000266"/>
    <property type="project" value="RGD"/>
</dbReference>
<dbReference type="GO" id="GO:0043542">
    <property type="term" value="P:endothelial cell migration"/>
    <property type="evidence" value="ECO:0000266"/>
    <property type="project" value="RGD"/>
</dbReference>
<dbReference type="GO" id="GO:0097498">
    <property type="term" value="P:endothelial tube lumen extension"/>
    <property type="evidence" value="ECO:0000266"/>
    <property type="project" value="RGD"/>
</dbReference>
<dbReference type="GO" id="GO:0045198">
    <property type="term" value="P:establishment of epithelial cell apical/basal polarity"/>
    <property type="evidence" value="ECO:0000250"/>
    <property type="project" value="UniProtKB"/>
</dbReference>
<dbReference type="GO" id="GO:0030950">
    <property type="term" value="P:establishment or maintenance of actin cytoskeleton polarity"/>
    <property type="evidence" value="ECO:0000266"/>
    <property type="project" value="RGD"/>
</dbReference>
<dbReference type="GO" id="GO:0021861">
    <property type="term" value="P:forebrain radial glial cell differentiation"/>
    <property type="evidence" value="ECO:0000266"/>
    <property type="project" value="RGD"/>
</dbReference>
<dbReference type="GO" id="GO:0046039">
    <property type="term" value="P:GTP metabolic process"/>
    <property type="evidence" value="ECO:0000314"/>
    <property type="project" value="BHF-UCL"/>
</dbReference>
<dbReference type="GO" id="GO:0001822">
    <property type="term" value="P:kidney development"/>
    <property type="evidence" value="ECO:0000266"/>
    <property type="project" value="RGD"/>
</dbReference>
<dbReference type="GO" id="GO:0000212">
    <property type="term" value="P:meiotic spindle organization"/>
    <property type="evidence" value="ECO:0000266"/>
    <property type="project" value="RGD"/>
</dbReference>
<dbReference type="GO" id="GO:0007019">
    <property type="term" value="P:microtubule depolymerization"/>
    <property type="evidence" value="ECO:0000315"/>
    <property type="project" value="RGD"/>
</dbReference>
<dbReference type="GO" id="GO:1903673">
    <property type="term" value="P:mitotic cleavage furrow formation"/>
    <property type="evidence" value="ECO:0000250"/>
    <property type="project" value="UniProtKB"/>
</dbReference>
<dbReference type="GO" id="GO:0090307">
    <property type="term" value="P:mitotic spindle assembly"/>
    <property type="evidence" value="ECO:0000266"/>
    <property type="project" value="RGD"/>
</dbReference>
<dbReference type="GO" id="GO:0097049">
    <property type="term" value="P:motor neuron apoptotic process"/>
    <property type="evidence" value="ECO:0000266"/>
    <property type="project" value="RGD"/>
</dbReference>
<dbReference type="GO" id="GO:0050919">
    <property type="term" value="P:negative chemotaxis"/>
    <property type="evidence" value="ECO:0000266"/>
    <property type="project" value="RGD"/>
</dbReference>
<dbReference type="GO" id="GO:0043124">
    <property type="term" value="P:negative regulation of canonical NF-kappaB signal transduction"/>
    <property type="evidence" value="ECO:0000315"/>
    <property type="project" value="RGD"/>
</dbReference>
<dbReference type="GO" id="GO:0090051">
    <property type="term" value="P:negative regulation of cell migration involved in sprouting angiogenesis"/>
    <property type="evidence" value="ECO:0000266"/>
    <property type="project" value="RGD"/>
</dbReference>
<dbReference type="GO" id="GO:0045792">
    <property type="term" value="P:negative regulation of cell size"/>
    <property type="evidence" value="ECO:0000266"/>
    <property type="project" value="RGD"/>
</dbReference>
<dbReference type="GO" id="GO:0010812">
    <property type="term" value="P:negative regulation of cell-substrate adhesion"/>
    <property type="evidence" value="ECO:0000266"/>
    <property type="project" value="RGD"/>
</dbReference>
<dbReference type="GO" id="GO:0033144">
    <property type="term" value="P:negative regulation of intracellular steroid hormone receptor signaling pathway"/>
    <property type="evidence" value="ECO:0000266"/>
    <property type="project" value="RGD"/>
</dbReference>
<dbReference type="GO" id="GO:2000672">
    <property type="term" value="P:negative regulation of motor neuron apoptotic process"/>
    <property type="evidence" value="ECO:0000266"/>
    <property type="project" value="RGD"/>
</dbReference>
<dbReference type="GO" id="GO:0045665">
    <property type="term" value="P:negative regulation of neuron differentiation"/>
    <property type="evidence" value="ECO:0000315"/>
    <property type="project" value="RGD"/>
</dbReference>
<dbReference type="GO" id="GO:0010977">
    <property type="term" value="P:negative regulation of neuron projection development"/>
    <property type="evidence" value="ECO:0000316"/>
    <property type="project" value="ParkinsonsUK-UCL"/>
</dbReference>
<dbReference type="GO" id="GO:0090324">
    <property type="term" value="P:negative regulation of oxidative phosphorylation"/>
    <property type="evidence" value="ECO:0000266"/>
    <property type="project" value="RGD"/>
</dbReference>
<dbReference type="GO" id="GO:1903427">
    <property type="term" value="P:negative regulation of reactive oxygen species biosynthetic process"/>
    <property type="evidence" value="ECO:0000266"/>
    <property type="project" value="RGD"/>
</dbReference>
<dbReference type="GO" id="GO:0051964">
    <property type="term" value="P:negative regulation of synapse assembly"/>
    <property type="evidence" value="ECO:0000315"/>
    <property type="project" value="RGD"/>
</dbReference>
<dbReference type="GO" id="GO:1904753">
    <property type="term" value="P:negative regulation of vascular associated smooth muscle cell migration"/>
    <property type="evidence" value="ECO:0000315"/>
    <property type="project" value="MGI"/>
</dbReference>
<dbReference type="GO" id="GO:1904706">
    <property type="term" value="P:negative regulation of vascular associated smooth muscle cell proliferation"/>
    <property type="evidence" value="ECO:0000315"/>
    <property type="project" value="MGI"/>
</dbReference>
<dbReference type="GO" id="GO:0001764">
    <property type="term" value="P:neuron migration"/>
    <property type="evidence" value="ECO:0000266"/>
    <property type="project" value="RGD"/>
</dbReference>
<dbReference type="GO" id="GO:0048812">
    <property type="term" value="P:neuron projection morphogenesis"/>
    <property type="evidence" value="ECO:0000270"/>
    <property type="project" value="RGD"/>
</dbReference>
<dbReference type="GO" id="GO:0042476">
    <property type="term" value="P:odontogenesis"/>
    <property type="evidence" value="ECO:0000266"/>
    <property type="project" value="RGD"/>
</dbReference>
<dbReference type="GO" id="GO:0043931">
    <property type="term" value="P:ossification involved in bone maturation"/>
    <property type="evidence" value="ECO:0000266"/>
    <property type="project" value="RGD"/>
</dbReference>
<dbReference type="GO" id="GO:0040038">
    <property type="term" value="P:polar body extrusion after meiotic divisions"/>
    <property type="evidence" value="ECO:0000266"/>
    <property type="project" value="RGD"/>
</dbReference>
<dbReference type="GO" id="GO:0030838">
    <property type="term" value="P:positive regulation of actin filament polymerization"/>
    <property type="evidence" value="ECO:0000315"/>
    <property type="project" value="RGD"/>
</dbReference>
<dbReference type="GO" id="GO:0046638">
    <property type="term" value="P:positive regulation of alpha-beta T cell differentiation"/>
    <property type="evidence" value="ECO:0000266"/>
    <property type="project" value="RGD"/>
</dbReference>
<dbReference type="GO" id="GO:0043123">
    <property type="term" value="P:positive regulation of canonical NF-kappaB signal transduction"/>
    <property type="evidence" value="ECO:0000250"/>
    <property type="project" value="UniProtKB"/>
</dbReference>
<dbReference type="GO" id="GO:0045785">
    <property type="term" value="P:positive regulation of cell adhesion"/>
    <property type="evidence" value="ECO:0000270"/>
    <property type="project" value="RGD"/>
</dbReference>
<dbReference type="GO" id="GO:0030307">
    <property type="term" value="P:positive regulation of cell growth"/>
    <property type="evidence" value="ECO:0000315"/>
    <property type="project" value="RGD"/>
</dbReference>
<dbReference type="GO" id="GO:0030335">
    <property type="term" value="P:positive regulation of cell migration"/>
    <property type="evidence" value="ECO:0000270"/>
    <property type="project" value="RGD"/>
</dbReference>
<dbReference type="GO" id="GO:0032467">
    <property type="term" value="P:positive regulation of cytokinesis"/>
    <property type="evidence" value="ECO:0000250"/>
    <property type="project" value="UniProtKB"/>
</dbReference>
<dbReference type="GO" id="GO:1904996">
    <property type="term" value="P:positive regulation of leukocyte adhesion to vascular endothelial cell"/>
    <property type="evidence" value="ECO:0000266"/>
    <property type="project" value="RGD"/>
</dbReference>
<dbReference type="GO" id="GO:0043525">
    <property type="term" value="P:positive regulation of neuron apoptotic process"/>
    <property type="evidence" value="ECO:0000315"/>
    <property type="project" value="RGD"/>
</dbReference>
<dbReference type="GO" id="GO:0045666">
    <property type="term" value="P:positive regulation of neuron differentiation"/>
    <property type="evidence" value="ECO:0000266"/>
    <property type="project" value="RGD"/>
</dbReference>
<dbReference type="GO" id="GO:0071803">
    <property type="term" value="P:positive regulation of podosome assembly"/>
    <property type="evidence" value="ECO:0000266"/>
    <property type="project" value="RGD"/>
</dbReference>
<dbReference type="GO" id="GO:0071902">
    <property type="term" value="P:positive regulation of protein serine/threonine kinase activity"/>
    <property type="evidence" value="ECO:0000250"/>
    <property type="project" value="UniProtKB"/>
</dbReference>
<dbReference type="GO" id="GO:0045987">
    <property type="term" value="P:positive regulation of smooth muscle contraction"/>
    <property type="evidence" value="ECO:0000315"/>
    <property type="project" value="RGD"/>
</dbReference>
<dbReference type="GO" id="GO:0051496">
    <property type="term" value="P:positive regulation of stress fiber assembly"/>
    <property type="evidence" value="ECO:0000266"/>
    <property type="project" value="RGD"/>
</dbReference>
<dbReference type="GO" id="GO:2000406">
    <property type="term" value="P:positive regulation of T cell migration"/>
    <property type="evidence" value="ECO:0000250"/>
    <property type="project" value="UniProtKB"/>
</dbReference>
<dbReference type="GO" id="GO:0045727">
    <property type="term" value="P:positive regulation of translation"/>
    <property type="evidence" value="ECO:0000270"/>
    <property type="project" value="RGD"/>
</dbReference>
<dbReference type="GO" id="GO:1904695">
    <property type="term" value="P:positive regulation of vascular associated smooth muscle contraction"/>
    <property type="evidence" value="ECO:0000266"/>
    <property type="project" value="RGD"/>
</dbReference>
<dbReference type="GO" id="GO:0045907">
    <property type="term" value="P:positive regulation of vasoconstriction"/>
    <property type="evidence" value="ECO:0000270"/>
    <property type="project" value="RGD"/>
</dbReference>
<dbReference type="GO" id="GO:0032956">
    <property type="term" value="P:regulation of actin cytoskeleton organization"/>
    <property type="evidence" value="ECO:0000266"/>
    <property type="project" value="RGD"/>
</dbReference>
<dbReference type="GO" id="GO:0008064">
    <property type="term" value="P:regulation of actin polymerization or depolymerization"/>
    <property type="evidence" value="ECO:0000270"/>
    <property type="project" value="RGD"/>
</dbReference>
<dbReference type="GO" id="GO:0051924">
    <property type="term" value="P:regulation of calcium ion transport"/>
    <property type="evidence" value="ECO:0000315"/>
    <property type="project" value="RGD"/>
</dbReference>
<dbReference type="GO" id="GO:0030334">
    <property type="term" value="P:regulation of cell migration"/>
    <property type="evidence" value="ECO:0000250"/>
    <property type="project" value="UniProtKB"/>
</dbReference>
<dbReference type="GO" id="GO:0050773">
    <property type="term" value="P:regulation of dendrite development"/>
    <property type="evidence" value="ECO:0000315"/>
    <property type="project" value="RGD"/>
</dbReference>
<dbReference type="GO" id="GO:0070507">
    <property type="term" value="P:regulation of microtubule cytoskeleton organization"/>
    <property type="evidence" value="ECO:0000266"/>
    <property type="project" value="RGD"/>
</dbReference>
<dbReference type="GO" id="GO:1905274">
    <property type="term" value="P:regulation of modification of postsynaptic actin cytoskeleton"/>
    <property type="evidence" value="ECO:0000266"/>
    <property type="project" value="RGD"/>
</dbReference>
<dbReference type="GO" id="GO:0099159">
    <property type="term" value="P:regulation of modification of postsynaptic structure"/>
    <property type="evidence" value="ECO:0000266"/>
    <property type="project" value="RGD"/>
</dbReference>
<dbReference type="GO" id="GO:2000177">
    <property type="term" value="P:regulation of neural precursor cell proliferation"/>
    <property type="evidence" value="ECO:0000266"/>
    <property type="project" value="RGD"/>
</dbReference>
<dbReference type="GO" id="GO:0010975">
    <property type="term" value="P:regulation of neuron projection development"/>
    <property type="evidence" value="ECO:0000266"/>
    <property type="project" value="RGD"/>
</dbReference>
<dbReference type="GO" id="GO:0033688">
    <property type="term" value="P:regulation of osteoblast proliferation"/>
    <property type="evidence" value="ECO:0000266"/>
    <property type="project" value="RGD"/>
</dbReference>
<dbReference type="GO" id="GO:0003100">
    <property type="term" value="P:regulation of systemic arterial blood pressure by endothelin"/>
    <property type="evidence" value="ECO:0000266"/>
    <property type="project" value="RGD"/>
</dbReference>
<dbReference type="GO" id="GO:0006357">
    <property type="term" value="P:regulation of transcription by RNA polymerase II"/>
    <property type="evidence" value="ECO:0000266"/>
    <property type="project" value="RGD"/>
</dbReference>
<dbReference type="GO" id="GO:0043200">
    <property type="term" value="P:response to amino acid"/>
    <property type="evidence" value="ECO:0000270"/>
    <property type="project" value="RGD"/>
</dbReference>
<dbReference type="GO" id="GO:0045471">
    <property type="term" value="P:response to ethanol"/>
    <property type="evidence" value="ECO:0000270"/>
    <property type="project" value="RGD"/>
</dbReference>
<dbReference type="GO" id="GO:0051384">
    <property type="term" value="P:response to glucocorticoid"/>
    <property type="evidence" value="ECO:0000270"/>
    <property type="project" value="RGD"/>
</dbReference>
<dbReference type="GO" id="GO:0009749">
    <property type="term" value="P:response to glucose"/>
    <property type="evidence" value="ECO:0000270"/>
    <property type="project" value="RGD"/>
</dbReference>
<dbReference type="GO" id="GO:0001666">
    <property type="term" value="P:response to hypoxia"/>
    <property type="evidence" value="ECO:0000270"/>
    <property type="project" value="RGD"/>
</dbReference>
<dbReference type="GO" id="GO:0009612">
    <property type="term" value="P:response to mechanical stimulus"/>
    <property type="evidence" value="ECO:0000270"/>
    <property type="project" value="RGD"/>
</dbReference>
<dbReference type="GO" id="GO:0009410">
    <property type="term" value="P:response to xenobiotic stimulus"/>
    <property type="evidence" value="ECO:0000314"/>
    <property type="project" value="RGD"/>
</dbReference>
<dbReference type="GO" id="GO:0007266">
    <property type="term" value="P:Rho protein signal transduction"/>
    <property type="evidence" value="ECO:0000315"/>
    <property type="project" value="MGI"/>
</dbReference>
<dbReference type="GO" id="GO:0035385">
    <property type="term" value="P:Roundabout signaling pathway"/>
    <property type="evidence" value="ECO:0000250"/>
    <property type="project" value="UniProtKB"/>
</dbReference>
<dbReference type="GO" id="GO:0071526">
    <property type="term" value="P:semaphorin-plexin signaling pathway"/>
    <property type="evidence" value="ECO:0000266"/>
    <property type="project" value="RGD"/>
</dbReference>
<dbReference type="GO" id="GO:1902766">
    <property type="term" value="P:skeletal muscle satellite cell migration"/>
    <property type="evidence" value="ECO:0000250"/>
    <property type="project" value="AgBase"/>
</dbReference>
<dbReference type="GO" id="GO:0007519">
    <property type="term" value="P:skeletal muscle tissue development"/>
    <property type="evidence" value="ECO:0000266"/>
    <property type="project" value="RGD"/>
</dbReference>
<dbReference type="GO" id="GO:0051653">
    <property type="term" value="P:spindle localization"/>
    <property type="evidence" value="ECO:0000266"/>
    <property type="project" value="RGD"/>
</dbReference>
<dbReference type="GO" id="GO:0043149">
    <property type="term" value="P:stress fiber assembly"/>
    <property type="evidence" value="ECO:0000250"/>
    <property type="project" value="UniProtKB"/>
</dbReference>
<dbReference type="GO" id="GO:0031098">
    <property type="term" value="P:stress-activated protein kinase signaling cascade"/>
    <property type="evidence" value="ECO:0000315"/>
    <property type="project" value="RGD"/>
</dbReference>
<dbReference type="GO" id="GO:0034446">
    <property type="term" value="P:substrate adhesion-dependent cell spreading"/>
    <property type="evidence" value="ECO:0000266"/>
    <property type="project" value="RGD"/>
</dbReference>
<dbReference type="GO" id="GO:0044319">
    <property type="term" value="P:wound healing, spreading of cells"/>
    <property type="evidence" value="ECO:0000250"/>
    <property type="project" value="AgBase"/>
</dbReference>
<dbReference type="CDD" id="cd01870">
    <property type="entry name" value="RhoA_like"/>
    <property type="match status" value="1"/>
</dbReference>
<dbReference type="FunFam" id="3.40.50.300:FF:000095">
    <property type="entry name" value="Rho-related GTP-binding protein RhoC"/>
    <property type="match status" value="1"/>
</dbReference>
<dbReference type="Gene3D" id="3.40.50.300">
    <property type="entry name" value="P-loop containing nucleotide triphosphate hydrolases"/>
    <property type="match status" value="1"/>
</dbReference>
<dbReference type="InterPro" id="IPR027417">
    <property type="entry name" value="P-loop_NTPase"/>
</dbReference>
<dbReference type="InterPro" id="IPR005225">
    <property type="entry name" value="Small_GTP-bd"/>
</dbReference>
<dbReference type="InterPro" id="IPR001806">
    <property type="entry name" value="Small_GTPase"/>
</dbReference>
<dbReference type="InterPro" id="IPR003578">
    <property type="entry name" value="Small_GTPase_Rho"/>
</dbReference>
<dbReference type="NCBIfam" id="TIGR00231">
    <property type="entry name" value="small_GTP"/>
    <property type="match status" value="1"/>
</dbReference>
<dbReference type="PANTHER" id="PTHR24072">
    <property type="entry name" value="RHO FAMILY GTPASE"/>
    <property type="match status" value="1"/>
</dbReference>
<dbReference type="Pfam" id="PF00071">
    <property type="entry name" value="Ras"/>
    <property type="match status" value="1"/>
</dbReference>
<dbReference type="PRINTS" id="PR00449">
    <property type="entry name" value="RASTRNSFRMNG"/>
</dbReference>
<dbReference type="SMART" id="SM00175">
    <property type="entry name" value="RAB"/>
    <property type="match status" value="1"/>
</dbReference>
<dbReference type="SMART" id="SM00173">
    <property type="entry name" value="RAS"/>
    <property type="match status" value="1"/>
</dbReference>
<dbReference type="SMART" id="SM00174">
    <property type="entry name" value="RHO"/>
    <property type="match status" value="1"/>
</dbReference>
<dbReference type="SUPFAM" id="SSF52540">
    <property type="entry name" value="P-loop containing nucleoside triphosphate hydrolases"/>
    <property type="match status" value="1"/>
</dbReference>
<dbReference type="PROSITE" id="PS51420">
    <property type="entry name" value="RHO"/>
    <property type="match status" value="1"/>
</dbReference>
<comment type="function">
    <text evidence="2 4 7 8">Small GTPase which cycles between an active GTP-bound and an inactive GDP-bound state. Mainly associated with cytoskeleton organization, in active state binds to a variety of effector proteins to regulate cellular responses such as cytoskeletal dynamics, cell migration and cell cycle. Regulates a signal transduction pathway linking plasma membrane receptors to the assembly of focal adhesions and actin stress fibers. Involved in a microtubule-dependent signal that is required for the myosin contractile ring formation during cell cycle cytokinesis. Plays an essential role in cleavage furrow formation. Required for the apical junction formation of keratinocyte cell-cell adhesion. Essential for the SPATA13-mediated regulation of cell migration and adhesion assembly and disassembly. The MEMO1-RHOA-DIAPH1 signaling pathway plays an important role in ERBB2-dependent stabilization of microtubules at the cell cortex. It controls the localization of APC and CLASP2 to the cell membrane, via the regulation of GSK3B activity. In turn, membrane-bound APC allows the localization of the MACF1 to the cell membrane, which is required for microtubule capture and stabilization (By similarity). Regulates KCNA2 potassium channel activity by reducing its location at the cell surface in response to CHRM1 activation; promotes KCNA2 endocytosis (PubMed:9635436). Acts as an allosteric activator of guanine nucleotide exchange factor ECT2 by binding in its activated GTP-bound form to the PH domain of ECT2 which stimulates the release of PH inhibition and promotes the binding of substrate RHOA to the ECT2 catalytic center (By similarity). May be an activator of PLCE1 (By similarity). In neurons, involved in the inhibition of the initial spine growth. Upon activation by CaMKII, modulates dendritic spine structural plasticity by relaying CaMKII transient activation to synapse-specific, long-term signaling (PubMed:21423166). Acts as a regulator of platelet alpha-granule release during activation and aggregation of platelets (By similarity). When activated by DAAM1 may signal centrosome maturation and chromosomal segregation during cell division. May also be involved in contractile ring formation during cytokinesis.</text>
</comment>
<comment type="catalytic activity">
    <reaction evidence="2">
        <text>GTP + H2O = GDP + phosphate + H(+)</text>
        <dbReference type="Rhea" id="RHEA:19669"/>
        <dbReference type="ChEBI" id="CHEBI:15377"/>
        <dbReference type="ChEBI" id="CHEBI:15378"/>
        <dbReference type="ChEBI" id="CHEBI:37565"/>
        <dbReference type="ChEBI" id="CHEBI:43474"/>
        <dbReference type="ChEBI" id="CHEBI:58189"/>
        <dbReference type="EC" id="3.6.5.2"/>
    </reaction>
    <physiologicalReaction direction="left-to-right" evidence="2">
        <dbReference type="Rhea" id="RHEA:19670"/>
    </physiologicalReaction>
</comment>
<comment type="activity regulation">
    <text evidence="2">Regulated by guanine nucleotide exchange factors (GEFs) which promote the exchange of bound GDP for free GTP, GTPase activating proteins (GAPs) which increase the GTP hydrolysis activity and GDP dissociation inhibitors which inhibit the dissociation of the nucleotide from the GTPase. Activated by GEFs such as ARHGEF2, ARHGEF3, ARHGEF28 and BCR. Inhibited by GAPs such as ARHGAP30. Inhibited by GDP dissociation inhibitors such as ARHGDIA.</text>
</comment>
<comment type="subunit">
    <text evidence="2 4 8">Interacts with ARHGEF28 (By similarity). Interacts (via GTP-bound form) with RIPOR1 (via N-terminus); this interaction links RHOA to STK24 and STK26 kinases. Interacts with RIPOR2 (via active GTP- or inactive GDP-bound forms) isoform 1 and isoform 2; these interactions are direct, block the loading of GTP to RHOA and decrease upon chemokine CCL19 stimulation in primary T lymphocytes. Binds PRKCL1, ROCK1 and ROCK2. Interacts with ARHGEF2, ARHGEF3, NET1 and RTKN. Interacts with PLCE1 and AKAP13. Interacts with DIAPH1. Interacts (in the constitutively activated, GTP-bound form) with DGKQ. Interacts with RACK1; enhances RHOA activation. Interacts with PKP4; the interaction is detected at the midbody. Interacts (GTP-bound form preferentially) with PKN2; the interaction stimulates autophosphorylation and phosphorylation of PKN2. Interacts with ARHGDIA; this interaction inactivates and stabilizes RHOA. Interacts with ARHGDIB (By similarity). Interacts (GTP-bound form) with KCNA2 (via cytoplasmic N-terminal domain) (PubMed:9635436). Interacts (GTP-bound form) with ECT2; the interaction results in allosteric activation of ECT2 (By similarity). Interacts with RAP1GDS1; the interaction is direct and in a 1:1 stoichiometry (By similarity).</text>
</comment>
<comment type="subcellular location">
    <subcellularLocation>
        <location evidence="2">Cell membrane</location>
        <topology evidence="2">Lipid-anchor</topology>
        <orientation evidence="2">Cytoplasmic side</orientation>
    </subcellularLocation>
    <subcellularLocation>
        <location evidence="2">Cytoplasm</location>
        <location evidence="2">Cytoskeleton</location>
    </subcellularLocation>
    <subcellularLocation>
        <location evidence="2">Cleavage furrow</location>
    </subcellularLocation>
    <subcellularLocation>
        <location evidence="2">Cytoplasm</location>
        <location evidence="2">Cell cortex</location>
    </subcellularLocation>
    <subcellularLocation>
        <location evidence="2">Midbody</location>
    </subcellularLocation>
    <subcellularLocation>
        <location evidence="4">Cell projection</location>
        <location evidence="4">Lamellipodium</location>
    </subcellularLocation>
    <subcellularLocation>
        <location evidence="10">Cell projection</location>
        <location evidence="10">Dendrite</location>
    </subcellularLocation>
    <subcellularLocation>
        <location evidence="2">Nucleus</location>
    </subcellularLocation>
    <subcellularLocation>
        <location evidence="2">Cytoplasm</location>
    </subcellularLocation>
    <text evidence="2 4">Localized to cell-cell contacts in calcium-treated keratinocytes (By similarity). Translocates to the equatorial region before furrow formation in a ECT2-dependent manner. Localizes to the equatorial cell cortex (at the site of the presumptive furrow) in early anaphase in an activated form and in a myosin- and actin-independent manner. Colocalizes with KANK1 at the contractile ring. Colocalizes with DAAM1 and KANK1 around centrosomes.</text>
</comment>
<comment type="PTM">
    <text evidence="2 6">Phosphorylation by PRKG1 at Ser-188 inactivates RHOA signaling (By similarity). Phosphorylation by SLK at Ser-188 in response to AGTR2 activation (PubMed:18420945).</text>
</comment>
<comment type="PTM">
    <text evidence="2 4">Ubiquitinated by the BCR(KCTD13) and BCR(TNFAIP1) E3 ubiquitin ligase complexes, leading to its degradation by the proteasome, thereby regulating the actin cytoskeleton and synaptic transmission in neurons. Ubiquitinated at Lys-135 in a FBXL19-mediated manner; leading to proteasomal degradation.</text>
</comment>
<comment type="PTM">
    <text evidence="4">Serotonylation of Gln-63 by TGM2 during activation and aggregation of platelets leads to constitutive activation of GTPase activity.</text>
</comment>
<comment type="similarity">
    <text evidence="9">Belongs to the small GTPase superfamily. Rho family.</text>
</comment>
<keyword id="KW-0002">3D-structure</keyword>
<keyword id="KW-0131">Cell cycle</keyword>
<keyword id="KW-0132">Cell division</keyword>
<keyword id="KW-1003">Cell membrane</keyword>
<keyword id="KW-0966">Cell projection</keyword>
<keyword id="KW-0963">Cytoplasm</keyword>
<keyword id="KW-0206">Cytoskeleton</keyword>
<keyword id="KW-0342">GTP-binding</keyword>
<keyword id="KW-0378">Hydrolase</keyword>
<keyword id="KW-1017">Isopeptide bond</keyword>
<keyword id="KW-0449">Lipoprotein</keyword>
<keyword id="KW-0472">Membrane</keyword>
<keyword id="KW-0488">Methylation</keyword>
<keyword id="KW-0547">Nucleotide-binding</keyword>
<keyword id="KW-0539">Nucleus</keyword>
<keyword id="KW-0597">Phosphoprotein</keyword>
<keyword id="KW-0636">Prenylation</keyword>
<keyword id="KW-0656">Proto-oncogene</keyword>
<keyword id="KW-1185">Reference proteome</keyword>
<keyword id="KW-0832">Ubl conjugation</keyword>
<feature type="chain" id="PRO_0000030415" description="Transforming protein RhoA">
    <location>
        <begin position="1"/>
        <end position="190"/>
    </location>
</feature>
<feature type="propeptide" id="PRO_0000030416" description="Removed in mature form" evidence="1">
    <location>
        <begin position="191"/>
        <end position="193"/>
    </location>
</feature>
<feature type="region of interest" description="Switch II region; involved in RAP1GDS1 binding" evidence="2">
    <location>
        <begin position="61"/>
        <end position="78"/>
    </location>
</feature>
<feature type="short sequence motif" description="Effector region" evidence="5">
    <location>
        <begin position="34"/>
        <end position="42"/>
    </location>
</feature>
<feature type="binding site" evidence="2">
    <location>
        <begin position="12"/>
        <end position="19"/>
    </location>
    <ligand>
        <name>GTP</name>
        <dbReference type="ChEBI" id="CHEBI:37565"/>
    </ligand>
</feature>
<feature type="binding site" evidence="3">
    <location>
        <begin position="30"/>
        <end position="37"/>
    </location>
    <ligand>
        <name>GTP</name>
        <dbReference type="ChEBI" id="CHEBI:37565"/>
    </ligand>
</feature>
<feature type="binding site" evidence="3">
    <location>
        <begin position="59"/>
        <end position="63"/>
    </location>
    <ligand>
        <name>GTP</name>
        <dbReference type="ChEBI" id="CHEBI:37565"/>
    </ligand>
</feature>
<feature type="binding site" evidence="2">
    <location>
        <begin position="117"/>
        <end position="120"/>
    </location>
    <ligand>
        <name>GTP</name>
        <dbReference type="ChEBI" id="CHEBI:37565"/>
    </ligand>
</feature>
<feature type="binding site" evidence="3">
    <location>
        <begin position="160"/>
        <end position="162"/>
    </location>
    <ligand>
        <name>GTP</name>
        <dbReference type="ChEBI" id="CHEBI:37565"/>
    </ligand>
</feature>
<feature type="modified residue" description="5-glutamyl serotonin" evidence="4">
    <location>
        <position position="63"/>
    </location>
</feature>
<feature type="modified residue" description="Phosphoserine; by PKG/PRKG1 and SLK" evidence="6">
    <location>
        <position position="188"/>
    </location>
</feature>
<feature type="modified residue" description="Cysteine methyl ester" evidence="1">
    <location>
        <position position="190"/>
    </location>
</feature>
<feature type="lipid moiety-binding region" description="S-geranylgeranyl cysteine" evidence="1">
    <location>
        <position position="190"/>
    </location>
</feature>
<feature type="cross-link" description="Glycyl lysine isopeptide (Lys-Gly) (interchain with G-Cter in ubiquitin)" evidence="2">
    <location>
        <position position="135"/>
    </location>
</feature>
<feature type="strand" evidence="13">
    <location>
        <begin position="4"/>
        <end position="13"/>
    </location>
</feature>
<feature type="helix" evidence="13">
    <location>
        <begin position="18"/>
        <end position="26"/>
    </location>
</feature>
<feature type="strand" evidence="13">
    <location>
        <begin position="40"/>
        <end position="48"/>
    </location>
</feature>
<feature type="strand" evidence="13">
    <location>
        <begin position="51"/>
        <end position="59"/>
    </location>
</feature>
<feature type="helix" evidence="13">
    <location>
        <begin position="64"/>
        <end position="66"/>
    </location>
</feature>
<feature type="turn" evidence="13">
    <location>
        <begin position="67"/>
        <end position="69"/>
    </location>
</feature>
<feature type="helix" evidence="13">
    <location>
        <begin position="70"/>
        <end position="73"/>
    </location>
</feature>
<feature type="strand" evidence="13">
    <location>
        <begin position="78"/>
        <end position="87"/>
    </location>
</feature>
<feature type="helix" evidence="13">
    <location>
        <begin position="89"/>
        <end position="97"/>
    </location>
</feature>
<feature type="helix" evidence="13">
    <location>
        <begin position="99"/>
        <end position="106"/>
    </location>
</feature>
<feature type="strand" evidence="13">
    <location>
        <begin position="112"/>
        <end position="117"/>
    </location>
</feature>
<feature type="helix" evidence="12">
    <location>
        <begin position="119"/>
        <end position="121"/>
    </location>
</feature>
<feature type="helix" evidence="12">
    <location>
        <begin position="125"/>
        <end position="133"/>
    </location>
</feature>
<feature type="helix" evidence="13">
    <location>
        <begin position="141"/>
        <end position="151"/>
    </location>
</feature>
<feature type="strand" evidence="13">
    <location>
        <begin position="154"/>
        <end position="158"/>
    </location>
</feature>
<feature type="turn" evidence="13">
    <location>
        <begin position="161"/>
        <end position="164"/>
    </location>
</feature>
<feature type="helix" evidence="13">
    <location>
        <begin position="167"/>
        <end position="178"/>
    </location>
</feature>
<accession>P61589</accession>